<dbReference type="EMBL" id="AC009606">
    <property type="protein sequence ID" value="AAF64539.1"/>
    <property type="molecule type" value="Genomic_DNA"/>
</dbReference>
<dbReference type="EMBL" id="CP002686">
    <property type="protein sequence ID" value="AEE74240.1"/>
    <property type="molecule type" value="Genomic_DNA"/>
</dbReference>
<dbReference type="EMBL" id="AB493602">
    <property type="protein sequence ID" value="BAH30440.1"/>
    <property type="molecule type" value="mRNA"/>
</dbReference>
<dbReference type="RefSeq" id="NP_187194.1">
    <property type="nucleotide sequence ID" value="NM_111416.3"/>
</dbReference>
<dbReference type="FunCoup" id="Q9MA56">
    <property type="interactions" value="819"/>
</dbReference>
<dbReference type="STRING" id="3702.Q9MA56"/>
<dbReference type="iPTMnet" id="Q9MA56"/>
<dbReference type="PaxDb" id="3702-AT3G05430.1"/>
<dbReference type="ProteomicsDB" id="185361"/>
<dbReference type="EnsemblPlants" id="AT3G05430.1">
    <property type="protein sequence ID" value="AT3G05430.1"/>
    <property type="gene ID" value="AT3G05430"/>
</dbReference>
<dbReference type="GeneID" id="819708"/>
<dbReference type="Gramene" id="AT3G05430.1">
    <property type="protein sequence ID" value="AT3G05430.1"/>
    <property type="gene ID" value="AT3G05430"/>
</dbReference>
<dbReference type="KEGG" id="ath:AT3G05430"/>
<dbReference type="Araport" id="AT3G05430"/>
<dbReference type="TAIR" id="AT3G05430">
    <property type="gene designation" value="PDP4"/>
</dbReference>
<dbReference type="eggNOG" id="ENOG502QQX0">
    <property type="taxonomic scope" value="Eukaryota"/>
</dbReference>
<dbReference type="HOGENOM" id="CLU_006566_0_0_1"/>
<dbReference type="InParanoid" id="Q9MA56"/>
<dbReference type="OMA" id="IDISHEM"/>
<dbReference type="PhylomeDB" id="Q9MA56"/>
<dbReference type="PRO" id="PR:Q9MA56"/>
<dbReference type="Proteomes" id="UP000006548">
    <property type="component" value="Chromosome 3"/>
</dbReference>
<dbReference type="ExpressionAtlas" id="Q9MA56">
    <property type="expression patterns" value="baseline and differential"/>
</dbReference>
<dbReference type="GO" id="GO:0035098">
    <property type="term" value="C:ESC/E(Z) complex"/>
    <property type="evidence" value="ECO:0000250"/>
    <property type="project" value="UniProtKB"/>
</dbReference>
<dbReference type="GO" id="GO:0006355">
    <property type="term" value="P:regulation of DNA-templated transcription"/>
    <property type="evidence" value="ECO:0000250"/>
    <property type="project" value="UniProtKB"/>
</dbReference>
<dbReference type="CDD" id="cd05162">
    <property type="entry name" value="PWWP"/>
    <property type="match status" value="1"/>
</dbReference>
<dbReference type="FunFam" id="2.30.30.140:FF:000115">
    <property type="entry name" value="Tudor/PWWP/MBT superfamily protein"/>
    <property type="match status" value="1"/>
</dbReference>
<dbReference type="Gene3D" id="2.30.30.140">
    <property type="match status" value="1"/>
</dbReference>
<dbReference type="InterPro" id="IPR052657">
    <property type="entry name" value="PDP_family_Arabidopsis"/>
</dbReference>
<dbReference type="InterPro" id="IPR000313">
    <property type="entry name" value="PWWP_dom"/>
</dbReference>
<dbReference type="PANTHER" id="PTHR10688">
    <property type="entry name" value="PWWP DOMAIN-CONTAINING PROTEIN"/>
    <property type="match status" value="1"/>
</dbReference>
<dbReference type="PANTHER" id="PTHR10688:SF5">
    <property type="entry name" value="PWWP DOMAIN-CONTAINING PROTEIN 1-RELATED"/>
    <property type="match status" value="1"/>
</dbReference>
<dbReference type="Pfam" id="PF00855">
    <property type="entry name" value="PWWP"/>
    <property type="match status" value="1"/>
</dbReference>
<dbReference type="SMART" id="SM00293">
    <property type="entry name" value="PWWP"/>
    <property type="match status" value="1"/>
</dbReference>
<dbReference type="SUPFAM" id="SSF63748">
    <property type="entry name" value="Tudor/PWWP/MBT"/>
    <property type="match status" value="1"/>
</dbReference>
<dbReference type="PROSITE" id="PS50812">
    <property type="entry name" value="PWWP"/>
    <property type="match status" value="1"/>
</dbReference>
<accession>Q9MA56</accession>
<comment type="function">
    <text evidence="1">May influence gene expression by regulating the function of the PRC2 complex and modulating H3K27me3 level.</text>
</comment>
<comment type="subunit">
    <text evidence="1">Component of the PRC2 (polycomb repressive complex 2) complex which regulates histone methylation on histone H3K27.</text>
</comment>
<comment type="subcellular location">
    <subcellularLocation>
        <location evidence="3">Nucleus</location>
    </subcellularLocation>
</comment>
<comment type="disruption phenotype">
    <text evidence="5">No visible flowering phenotype.</text>
</comment>
<comment type="similarity">
    <text evidence="7">Belongs to the PDP family.</text>
</comment>
<proteinExistence type="evidence at transcript level"/>
<reference key="1">
    <citation type="journal article" date="2000" name="Nature">
        <title>Sequence and analysis of chromosome 3 of the plant Arabidopsis thaliana.</title>
        <authorList>
            <person name="Salanoubat M."/>
            <person name="Lemcke K."/>
            <person name="Rieger M."/>
            <person name="Ansorge W."/>
            <person name="Unseld M."/>
            <person name="Fartmann B."/>
            <person name="Valle G."/>
            <person name="Bloecker H."/>
            <person name="Perez-Alonso M."/>
            <person name="Obermaier B."/>
            <person name="Delseny M."/>
            <person name="Boutry M."/>
            <person name="Grivell L.A."/>
            <person name="Mache R."/>
            <person name="Puigdomenech P."/>
            <person name="De Simone V."/>
            <person name="Choisne N."/>
            <person name="Artiguenave F."/>
            <person name="Robert C."/>
            <person name="Brottier P."/>
            <person name="Wincker P."/>
            <person name="Cattolico L."/>
            <person name="Weissenbach J."/>
            <person name="Saurin W."/>
            <person name="Quetier F."/>
            <person name="Schaefer M."/>
            <person name="Mueller-Auer S."/>
            <person name="Gabel C."/>
            <person name="Fuchs M."/>
            <person name="Benes V."/>
            <person name="Wurmbach E."/>
            <person name="Drzonek H."/>
            <person name="Erfle H."/>
            <person name="Jordan N."/>
            <person name="Bangert S."/>
            <person name="Wiedelmann R."/>
            <person name="Kranz H."/>
            <person name="Voss H."/>
            <person name="Holland R."/>
            <person name="Brandt P."/>
            <person name="Nyakatura G."/>
            <person name="Vezzi A."/>
            <person name="D'Angelo M."/>
            <person name="Pallavicini A."/>
            <person name="Toppo S."/>
            <person name="Simionati B."/>
            <person name="Conrad A."/>
            <person name="Hornischer K."/>
            <person name="Kauer G."/>
            <person name="Loehnert T.-H."/>
            <person name="Nordsiek G."/>
            <person name="Reichelt J."/>
            <person name="Scharfe M."/>
            <person name="Schoen O."/>
            <person name="Bargues M."/>
            <person name="Terol J."/>
            <person name="Climent J."/>
            <person name="Navarro P."/>
            <person name="Collado C."/>
            <person name="Perez-Perez A."/>
            <person name="Ottenwaelder B."/>
            <person name="Duchemin D."/>
            <person name="Cooke R."/>
            <person name="Laudie M."/>
            <person name="Berger-Llauro C."/>
            <person name="Purnelle B."/>
            <person name="Masuy D."/>
            <person name="de Haan M."/>
            <person name="Maarse A.C."/>
            <person name="Alcaraz J.-P."/>
            <person name="Cottet A."/>
            <person name="Casacuberta E."/>
            <person name="Monfort A."/>
            <person name="Argiriou A."/>
            <person name="Flores M."/>
            <person name="Liguori R."/>
            <person name="Vitale D."/>
            <person name="Mannhaupt G."/>
            <person name="Haase D."/>
            <person name="Schoof H."/>
            <person name="Rudd S."/>
            <person name="Zaccaria P."/>
            <person name="Mewes H.-W."/>
            <person name="Mayer K.F.X."/>
            <person name="Kaul S."/>
            <person name="Town C.D."/>
            <person name="Koo H.L."/>
            <person name="Tallon L.J."/>
            <person name="Jenkins J."/>
            <person name="Rooney T."/>
            <person name="Rizzo M."/>
            <person name="Walts A."/>
            <person name="Utterback T."/>
            <person name="Fujii C.Y."/>
            <person name="Shea T.P."/>
            <person name="Creasy T.H."/>
            <person name="Haas B."/>
            <person name="Maiti R."/>
            <person name="Wu D."/>
            <person name="Peterson J."/>
            <person name="Van Aken S."/>
            <person name="Pai G."/>
            <person name="Militscher J."/>
            <person name="Sellers P."/>
            <person name="Gill J.E."/>
            <person name="Feldblyum T.V."/>
            <person name="Preuss D."/>
            <person name="Lin X."/>
            <person name="Nierman W.C."/>
            <person name="Salzberg S.L."/>
            <person name="White O."/>
            <person name="Venter J.C."/>
            <person name="Fraser C.M."/>
            <person name="Kaneko T."/>
            <person name="Nakamura Y."/>
            <person name="Sato S."/>
            <person name="Kato T."/>
            <person name="Asamizu E."/>
            <person name="Sasamoto S."/>
            <person name="Kimura T."/>
            <person name="Idesawa K."/>
            <person name="Kawashima K."/>
            <person name="Kishida Y."/>
            <person name="Kiyokawa C."/>
            <person name="Kohara M."/>
            <person name="Matsumoto M."/>
            <person name="Matsuno A."/>
            <person name="Muraki A."/>
            <person name="Nakayama S."/>
            <person name="Nakazaki N."/>
            <person name="Shinpo S."/>
            <person name="Takeuchi C."/>
            <person name="Wada T."/>
            <person name="Watanabe A."/>
            <person name="Yamada M."/>
            <person name="Yasuda M."/>
            <person name="Tabata S."/>
        </authorList>
    </citation>
    <scope>NUCLEOTIDE SEQUENCE [LARGE SCALE GENOMIC DNA]</scope>
    <source>
        <strain>cv. Columbia</strain>
    </source>
</reference>
<reference key="2">
    <citation type="journal article" date="2017" name="Plant J.">
        <title>Araport11: a complete reannotation of the Arabidopsis thaliana reference genome.</title>
        <authorList>
            <person name="Cheng C.Y."/>
            <person name="Krishnakumar V."/>
            <person name="Chan A.P."/>
            <person name="Thibaud-Nissen F."/>
            <person name="Schobel S."/>
            <person name="Town C.D."/>
        </authorList>
    </citation>
    <scope>GENOME REANNOTATION</scope>
    <source>
        <strain>cv. Columbia</strain>
    </source>
</reference>
<reference key="3">
    <citation type="submission" date="2009-03" db="EMBL/GenBank/DDBJ databases">
        <title>ORF cloning and analysis of Arabidopsis transcription factor genes.</title>
        <authorList>
            <person name="Fujita M."/>
            <person name="Mizukado S."/>
            <person name="Seki M."/>
            <person name="Shinozaki K."/>
            <person name="Mitsuda N."/>
            <person name="Takiguchi Y."/>
            <person name="Takagi M."/>
        </authorList>
    </citation>
    <scope>NUCLEOTIDE SEQUENCE [LARGE SCALE MRNA]</scope>
</reference>
<reference key="4">
    <citation type="journal article" date="2018" name="J. Integr. Plant Biol.">
        <title>Arabidopsis PWWP domain proteins mediate H3K27 trimethylation on FLC and regulate flowering time.</title>
        <authorList>
            <person name="Zhou J.X."/>
            <person name="Liu Z.W."/>
            <person name="Li Y.Q."/>
            <person name="Li L."/>
            <person name="Wang B."/>
            <person name="Chen S."/>
            <person name="He X.J."/>
        </authorList>
    </citation>
    <scope>DISRUPTION PHENOTYPE</scope>
    <scope>GENE FAMILY</scope>
    <scope>NOMENCLATURE</scope>
</reference>
<sequence>MNSAEVNVNPRVFGDSFVTFSGNGSGKFEMIDQAEAFLMELDSVAADTGSDGNGNVDLGSRVSNSETEPRFCEMKREIRDSDHRFYELCNESGEKKMEKRRVPDYKSFLSEFDDYVAREKMGSRNSKALSYGFEVGDMVWGKVKSHPWWPGQIFNEAFASPSVRRVKKMGYVLVAFFGDNSYGWFDPAELIPFEPHVKEKSQQTSSDHFAKAVEEAMNEVGRRSALGLTCKCRNQYNFRPINAQGYFAVDVPDYEVQAIYSSKQIQKARDSFSSVQTLAFVKRCALAPQECDTDSLKSFQKKVAVCAFRRAVFEEFDETYEQAFRARSVYCLMKTHEPLNRAPLRVPLSGSLVSAETLGNPKSYTKAMNVKDSTKQDKYLPKRREEAGDMTVQFGQVQESSQFQGINGSSAWDRLLQRRTPCLQTPRKHEQTGLVSMNFTSSSGNIPGKKSSVSKLSRDDDKGLAQESDVRMGEKATLFPDQEKFEPMKSLKQDETGTNSRSNKSSLKLFSGGKFSAGVGIKKGNVVKRSSGEMKSENCPPEPKKKKKEYVSELNRDTPDKRKALSSGEAWAKKSSQVDSAKRRSNMLIVKLDGLQLLSNLLALSLDPLFGSSDRSSFRVIRQFFFHFRSHVYQKSLATSPSATKLSKSAKTLCRANEQSKAGRNRISSDSQQDVPSTKKLKKTIQFKPLASDKKTNQDATKRSSLAPLNPVRDQCRVPINAKPAIVQQEKKTGPSAMVVEPTMLVMMFPPGESLPSIDLLKARFGRFGQLDQSAIRVSWKSSICRVGFLYKLDAQTALRYVSGSKSLFGNVNVTYFLRDMKASSASGDHELKKAKRPKTDKPITKPLNQLLEQAPPVHQPNIQLKSCLKKPGNNRNGNHRTVRVKFMLGEKETESPFSVSILPLSSQDSEPKPVNNQVDHVEPPLDPSQLKVDISLQMMELLTRCNDAVANVTGLLGYVPYHSL</sequence>
<protein>
    <recommendedName>
        <fullName evidence="6">PWWP domain-containing protein 4</fullName>
    </recommendedName>
</protein>
<gene>
    <name evidence="6" type="primary">PDP4</name>
    <name evidence="8" type="ordered locus">At3g05430</name>
    <name evidence="9" type="ORF">F22F7.12</name>
</gene>
<name>PDP4_ARATH</name>
<keyword id="KW-0539">Nucleus</keyword>
<keyword id="KW-1185">Reference proteome</keyword>
<keyword id="KW-0804">Transcription</keyword>
<keyword id="KW-0805">Transcription regulation</keyword>
<evidence type="ECO:0000250" key="1">
    <source>
        <dbReference type="UniProtKB" id="Q9FNE4"/>
    </source>
</evidence>
<evidence type="ECO:0000255" key="2">
    <source>
        <dbReference type="PROSITE-ProRule" id="PRU00162"/>
    </source>
</evidence>
<evidence type="ECO:0000255" key="3">
    <source>
        <dbReference type="PROSITE-ProRule" id="PRU00768"/>
    </source>
</evidence>
<evidence type="ECO:0000256" key="4">
    <source>
        <dbReference type="SAM" id="MobiDB-lite"/>
    </source>
</evidence>
<evidence type="ECO:0000269" key="5">
    <source>
    </source>
</evidence>
<evidence type="ECO:0000303" key="6">
    <source>
    </source>
</evidence>
<evidence type="ECO:0000305" key="7"/>
<evidence type="ECO:0000312" key="8">
    <source>
        <dbReference type="Araport" id="AT3G05430"/>
    </source>
</evidence>
<evidence type="ECO:0000312" key="9">
    <source>
        <dbReference type="EMBL" id="AAF64539.1"/>
    </source>
</evidence>
<feature type="chain" id="PRO_0000453272" description="PWWP domain-containing protein 4">
    <location>
        <begin position="1"/>
        <end position="965"/>
    </location>
</feature>
<feature type="domain" description="PWWP" evidence="2">
    <location>
        <begin position="135"/>
        <end position="196"/>
    </location>
</feature>
<feature type="region of interest" description="Disordered" evidence="4">
    <location>
        <begin position="437"/>
        <end position="507"/>
    </location>
</feature>
<feature type="region of interest" description="Disordered" evidence="4">
    <location>
        <begin position="526"/>
        <end position="577"/>
    </location>
</feature>
<feature type="region of interest" description="Disordered" evidence="4">
    <location>
        <begin position="649"/>
        <end position="708"/>
    </location>
</feature>
<feature type="region of interest" description="Disordered" evidence="4">
    <location>
        <begin position="905"/>
        <end position="927"/>
    </location>
</feature>
<feature type="short sequence motif" description="Nuclear localization signal" evidence="3">
    <location>
        <begin position="546"/>
        <end position="553"/>
    </location>
</feature>
<feature type="compositionally biased region" description="Polar residues" evidence="4">
    <location>
        <begin position="437"/>
        <end position="455"/>
    </location>
</feature>
<feature type="compositionally biased region" description="Basic and acidic residues" evidence="4">
    <location>
        <begin position="456"/>
        <end position="474"/>
    </location>
</feature>
<feature type="compositionally biased region" description="Basic and acidic residues" evidence="4">
    <location>
        <begin position="481"/>
        <end position="495"/>
    </location>
</feature>
<feature type="compositionally biased region" description="Polar residues" evidence="4">
    <location>
        <begin position="496"/>
        <end position="507"/>
    </location>
</feature>
<feature type="compositionally biased region" description="Basic and acidic residues" evidence="4">
    <location>
        <begin position="549"/>
        <end position="563"/>
    </location>
</feature>
<feature type="compositionally biased region" description="Polar residues" evidence="4">
    <location>
        <begin position="657"/>
        <end position="676"/>
    </location>
</feature>
<feature type="compositionally biased region" description="Basic and acidic residues" evidence="4">
    <location>
        <begin position="691"/>
        <end position="702"/>
    </location>
</feature>
<feature type="compositionally biased region" description="Polar residues" evidence="4">
    <location>
        <begin position="905"/>
        <end position="919"/>
    </location>
</feature>
<organism>
    <name type="scientific">Arabidopsis thaliana</name>
    <name type="common">Mouse-ear cress</name>
    <dbReference type="NCBI Taxonomy" id="3702"/>
    <lineage>
        <taxon>Eukaryota</taxon>
        <taxon>Viridiplantae</taxon>
        <taxon>Streptophyta</taxon>
        <taxon>Embryophyta</taxon>
        <taxon>Tracheophyta</taxon>
        <taxon>Spermatophyta</taxon>
        <taxon>Magnoliopsida</taxon>
        <taxon>eudicotyledons</taxon>
        <taxon>Gunneridae</taxon>
        <taxon>Pentapetalae</taxon>
        <taxon>rosids</taxon>
        <taxon>malvids</taxon>
        <taxon>Brassicales</taxon>
        <taxon>Brassicaceae</taxon>
        <taxon>Camelineae</taxon>
        <taxon>Arabidopsis</taxon>
    </lineage>
</organism>